<comment type="function">
    <text evidence="1">DNA-dependent RNA polymerase catalyzes the transcription of DNA into RNA using the four ribonucleoside triphosphates as substrates.</text>
</comment>
<comment type="catalytic activity">
    <reaction evidence="1">
        <text>RNA(n) + a ribonucleoside 5'-triphosphate = RNA(n+1) + diphosphate</text>
        <dbReference type="Rhea" id="RHEA:21248"/>
        <dbReference type="Rhea" id="RHEA-COMP:14527"/>
        <dbReference type="Rhea" id="RHEA-COMP:17342"/>
        <dbReference type="ChEBI" id="CHEBI:33019"/>
        <dbReference type="ChEBI" id="CHEBI:61557"/>
        <dbReference type="ChEBI" id="CHEBI:140395"/>
        <dbReference type="EC" id="2.7.7.6"/>
    </reaction>
</comment>
<comment type="subunit">
    <text evidence="1">Homodimer. The RNAP catalytic core consists of 2 alpha, 1 beta, 1 beta' and 1 omega subunit. When a sigma factor is associated with the core the holoenzyme is formed, which can initiate transcription.</text>
</comment>
<comment type="domain">
    <text evidence="1">The N-terminal domain is essential for RNAP assembly and basal transcription, whereas the C-terminal domain is involved in interaction with transcriptional regulators and with upstream promoter elements.</text>
</comment>
<comment type="similarity">
    <text evidence="1">Belongs to the RNA polymerase alpha chain family.</text>
</comment>
<proteinExistence type="inferred from homology"/>
<evidence type="ECO:0000255" key="1">
    <source>
        <dbReference type="HAMAP-Rule" id="MF_00059"/>
    </source>
</evidence>
<organism>
    <name type="scientific">Methylorubrum populi (strain ATCC BAA-705 / NCIMB 13946 / BJ001)</name>
    <name type="common">Methylobacterium populi</name>
    <dbReference type="NCBI Taxonomy" id="441620"/>
    <lineage>
        <taxon>Bacteria</taxon>
        <taxon>Pseudomonadati</taxon>
        <taxon>Pseudomonadota</taxon>
        <taxon>Alphaproteobacteria</taxon>
        <taxon>Hyphomicrobiales</taxon>
        <taxon>Methylobacteriaceae</taxon>
        <taxon>Methylorubrum</taxon>
    </lineage>
</organism>
<accession>B1Z768</accession>
<dbReference type="EC" id="2.7.7.6" evidence="1"/>
<dbReference type="EMBL" id="CP001029">
    <property type="protein sequence ID" value="ACB80301.1"/>
    <property type="molecule type" value="Genomic_DNA"/>
</dbReference>
<dbReference type="SMR" id="B1Z768"/>
<dbReference type="STRING" id="441620.Mpop_2139"/>
<dbReference type="KEGG" id="mpo:Mpop_2139"/>
<dbReference type="eggNOG" id="COG0202">
    <property type="taxonomic scope" value="Bacteria"/>
</dbReference>
<dbReference type="HOGENOM" id="CLU_053084_0_0_5"/>
<dbReference type="OrthoDB" id="9805706at2"/>
<dbReference type="Proteomes" id="UP000007136">
    <property type="component" value="Chromosome"/>
</dbReference>
<dbReference type="GO" id="GO:0005737">
    <property type="term" value="C:cytoplasm"/>
    <property type="evidence" value="ECO:0007669"/>
    <property type="project" value="UniProtKB-ARBA"/>
</dbReference>
<dbReference type="GO" id="GO:0000428">
    <property type="term" value="C:DNA-directed RNA polymerase complex"/>
    <property type="evidence" value="ECO:0007669"/>
    <property type="project" value="UniProtKB-KW"/>
</dbReference>
<dbReference type="GO" id="GO:0003677">
    <property type="term" value="F:DNA binding"/>
    <property type="evidence" value="ECO:0007669"/>
    <property type="project" value="UniProtKB-UniRule"/>
</dbReference>
<dbReference type="GO" id="GO:0003899">
    <property type="term" value="F:DNA-directed RNA polymerase activity"/>
    <property type="evidence" value="ECO:0007669"/>
    <property type="project" value="UniProtKB-UniRule"/>
</dbReference>
<dbReference type="GO" id="GO:0046983">
    <property type="term" value="F:protein dimerization activity"/>
    <property type="evidence" value="ECO:0007669"/>
    <property type="project" value="InterPro"/>
</dbReference>
<dbReference type="GO" id="GO:0006351">
    <property type="term" value="P:DNA-templated transcription"/>
    <property type="evidence" value="ECO:0007669"/>
    <property type="project" value="UniProtKB-UniRule"/>
</dbReference>
<dbReference type="CDD" id="cd06928">
    <property type="entry name" value="RNAP_alpha_NTD"/>
    <property type="match status" value="1"/>
</dbReference>
<dbReference type="FunFam" id="1.10.150.20:FF:000001">
    <property type="entry name" value="DNA-directed RNA polymerase subunit alpha"/>
    <property type="match status" value="1"/>
</dbReference>
<dbReference type="FunFam" id="2.170.120.12:FF:000001">
    <property type="entry name" value="DNA-directed RNA polymerase subunit alpha"/>
    <property type="match status" value="1"/>
</dbReference>
<dbReference type="Gene3D" id="1.10.150.20">
    <property type="entry name" value="5' to 3' exonuclease, C-terminal subdomain"/>
    <property type="match status" value="1"/>
</dbReference>
<dbReference type="Gene3D" id="2.170.120.12">
    <property type="entry name" value="DNA-directed RNA polymerase, insert domain"/>
    <property type="match status" value="1"/>
</dbReference>
<dbReference type="Gene3D" id="3.30.1360.10">
    <property type="entry name" value="RNA polymerase, RBP11-like subunit"/>
    <property type="match status" value="1"/>
</dbReference>
<dbReference type="HAMAP" id="MF_00059">
    <property type="entry name" value="RNApol_bact_RpoA"/>
    <property type="match status" value="1"/>
</dbReference>
<dbReference type="InterPro" id="IPR011262">
    <property type="entry name" value="DNA-dir_RNA_pol_insert"/>
</dbReference>
<dbReference type="InterPro" id="IPR011263">
    <property type="entry name" value="DNA-dir_RNA_pol_RpoA/D/Rpb3"/>
</dbReference>
<dbReference type="InterPro" id="IPR011773">
    <property type="entry name" value="DNA-dir_RpoA"/>
</dbReference>
<dbReference type="InterPro" id="IPR036603">
    <property type="entry name" value="RBP11-like"/>
</dbReference>
<dbReference type="InterPro" id="IPR011260">
    <property type="entry name" value="RNAP_asu_C"/>
</dbReference>
<dbReference type="InterPro" id="IPR036643">
    <property type="entry name" value="RNApol_insert_sf"/>
</dbReference>
<dbReference type="NCBIfam" id="NF003513">
    <property type="entry name" value="PRK05182.1-2"/>
    <property type="match status" value="1"/>
</dbReference>
<dbReference type="NCBIfam" id="NF003519">
    <property type="entry name" value="PRK05182.2-5"/>
    <property type="match status" value="1"/>
</dbReference>
<dbReference type="NCBIfam" id="TIGR02027">
    <property type="entry name" value="rpoA"/>
    <property type="match status" value="1"/>
</dbReference>
<dbReference type="Pfam" id="PF01000">
    <property type="entry name" value="RNA_pol_A_bac"/>
    <property type="match status" value="1"/>
</dbReference>
<dbReference type="Pfam" id="PF03118">
    <property type="entry name" value="RNA_pol_A_CTD"/>
    <property type="match status" value="1"/>
</dbReference>
<dbReference type="Pfam" id="PF01193">
    <property type="entry name" value="RNA_pol_L"/>
    <property type="match status" value="1"/>
</dbReference>
<dbReference type="SMART" id="SM00662">
    <property type="entry name" value="RPOLD"/>
    <property type="match status" value="1"/>
</dbReference>
<dbReference type="SUPFAM" id="SSF47789">
    <property type="entry name" value="C-terminal domain of RNA polymerase alpha subunit"/>
    <property type="match status" value="1"/>
</dbReference>
<dbReference type="SUPFAM" id="SSF56553">
    <property type="entry name" value="Insert subdomain of RNA polymerase alpha subunit"/>
    <property type="match status" value="1"/>
</dbReference>
<dbReference type="SUPFAM" id="SSF55257">
    <property type="entry name" value="RBP11-like subunits of RNA polymerase"/>
    <property type="match status" value="1"/>
</dbReference>
<sequence length="339" mass="37187">MVIQKNWQELIKPNKLQVSAGDDPKRVATVVAEPLERGFGTTLGNSLRRVLLSSLQGAAVTSVQIDGVLHEFSSIPGVREDVTDIVLNIKTIAIRSQTDQPKRMTLRKTGPGLVTAGDIGAVGDIQILNPDLVICTLDDGAEIRMEFTVATGKGYVPADRNRPEDAPIGLIPVDALFSPVTKVSYRVETTREGQDLDKDKLTMTVETNGAVSPEDALAYAARIIQDQLQVFVNFEEPRKEEAAPLAPQLPFNPALLKKVDELELSVRSANCLKNDNIVYIGDLIQKSEGEMLRTPNFGRKSLNEIKEVLAGMGLHLGMDVPGWPPENIEDLAKRFEEHY</sequence>
<protein>
    <recommendedName>
        <fullName evidence="1">DNA-directed RNA polymerase subunit alpha</fullName>
        <shortName evidence="1">RNAP subunit alpha</shortName>
        <ecNumber evidence="1">2.7.7.6</ecNumber>
    </recommendedName>
    <alternativeName>
        <fullName evidence="1">RNA polymerase subunit alpha</fullName>
    </alternativeName>
    <alternativeName>
        <fullName evidence="1">Transcriptase subunit alpha</fullName>
    </alternativeName>
</protein>
<gene>
    <name evidence="1" type="primary">rpoA</name>
    <name type="ordered locus">Mpop_2139</name>
</gene>
<reference key="1">
    <citation type="submission" date="2008-04" db="EMBL/GenBank/DDBJ databases">
        <title>Complete sequence of chromosome of Methylobacterium populi BJ001.</title>
        <authorList>
            <consortium name="US DOE Joint Genome Institute"/>
            <person name="Copeland A."/>
            <person name="Lucas S."/>
            <person name="Lapidus A."/>
            <person name="Glavina del Rio T."/>
            <person name="Dalin E."/>
            <person name="Tice H."/>
            <person name="Bruce D."/>
            <person name="Goodwin L."/>
            <person name="Pitluck S."/>
            <person name="Chertkov O."/>
            <person name="Brettin T."/>
            <person name="Detter J.C."/>
            <person name="Han C."/>
            <person name="Kuske C.R."/>
            <person name="Schmutz J."/>
            <person name="Larimer F."/>
            <person name="Land M."/>
            <person name="Hauser L."/>
            <person name="Kyrpides N."/>
            <person name="Mikhailova N."/>
            <person name="Marx C."/>
            <person name="Richardson P."/>
        </authorList>
    </citation>
    <scope>NUCLEOTIDE SEQUENCE [LARGE SCALE GENOMIC DNA]</scope>
    <source>
        <strain>ATCC BAA-705 / NCIMB 13946 / BJ001</strain>
    </source>
</reference>
<keyword id="KW-0240">DNA-directed RNA polymerase</keyword>
<keyword id="KW-0548">Nucleotidyltransferase</keyword>
<keyword id="KW-0804">Transcription</keyword>
<keyword id="KW-0808">Transferase</keyword>
<feature type="chain" id="PRO_1000196642" description="DNA-directed RNA polymerase subunit alpha">
    <location>
        <begin position="1"/>
        <end position="339"/>
    </location>
</feature>
<feature type="region of interest" description="Alpha N-terminal domain (alpha-NTD)" evidence="1">
    <location>
        <begin position="1"/>
        <end position="235"/>
    </location>
</feature>
<feature type="region of interest" description="Alpha C-terminal domain (alpha-CTD)" evidence="1">
    <location>
        <begin position="251"/>
        <end position="339"/>
    </location>
</feature>
<name>RPOA_METPB</name>